<organism>
    <name type="scientific">Nitrobacter winogradskyi (strain ATCC 25391 / DSM 10237 / CIP 104748 / NCIMB 11846 / Nb-255)</name>
    <dbReference type="NCBI Taxonomy" id="323098"/>
    <lineage>
        <taxon>Bacteria</taxon>
        <taxon>Pseudomonadati</taxon>
        <taxon>Pseudomonadota</taxon>
        <taxon>Alphaproteobacteria</taxon>
        <taxon>Hyphomicrobiales</taxon>
        <taxon>Nitrobacteraceae</taxon>
        <taxon>Nitrobacter</taxon>
    </lineage>
</organism>
<evidence type="ECO:0000255" key="1">
    <source>
        <dbReference type="HAMAP-Rule" id="MF_00122"/>
    </source>
</evidence>
<accession>Q3SR29</accession>
<dbReference type="EC" id="6.3.5.-" evidence="1"/>
<dbReference type="EMBL" id="CP000115">
    <property type="protein sequence ID" value="ABA05262.1"/>
    <property type="molecule type" value="Genomic_DNA"/>
</dbReference>
<dbReference type="RefSeq" id="WP_011315248.1">
    <property type="nucleotide sequence ID" value="NC_007406.1"/>
</dbReference>
<dbReference type="SMR" id="Q3SR29"/>
<dbReference type="STRING" id="323098.Nwi_2003"/>
<dbReference type="KEGG" id="nwi:Nwi_2003"/>
<dbReference type="eggNOG" id="COG0721">
    <property type="taxonomic scope" value="Bacteria"/>
</dbReference>
<dbReference type="HOGENOM" id="CLU_105899_2_0_5"/>
<dbReference type="OrthoDB" id="9794326at2"/>
<dbReference type="Proteomes" id="UP000002531">
    <property type="component" value="Chromosome"/>
</dbReference>
<dbReference type="GO" id="GO:0050566">
    <property type="term" value="F:asparaginyl-tRNA synthase (glutamine-hydrolyzing) activity"/>
    <property type="evidence" value="ECO:0007669"/>
    <property type="project" value="RHEA"/>
</dbReference>
<dbReference type="GO" id="GO:0005524">
    <property type="term" value="F:ATP binding"/>
    <property type="evidence" value="ECO:0007669"/>
    <property type="project" value="UniProtKB-KW"/>
</dbReference>
<dbReference type="GO" id="GO:0050567">
    <property type="term" value="F:glutaminyl-tRNA synthase (glutamine-hydrolyzing) activity"/>
    <property type="evidence" value="ECO:0007669"/>
    <property type="project" value="UniProtKB-UniRule"/>
</dbReference>
<dbReference type="GO" id="GO:0070681">
    <property type="term" value="P:glutaminyl-tRNAGln biosynthesis via transamidation"/>
    <property type="evidence" value="ECO:0007669"/>
    <property type="project" value="TreeGrafter"/>
</dbReference>
<dbReference type="GO" id="GO:0006450">
    <property type="term" value="P:regulation of translational fidelity"/>
    <property type="evidence" value="ECO:0007669"/>
    <property type="project" value="InterPro"/>
</dbReference>
<dbReference type="GO" id="GO:0006412">
    <property type="term" value="P:translation"/>
    <property type="evidence" value="ECO:0007669"/>
    <property type="project" value="UniProtKB-UniRule"/>
</dbReference>
<dbReference type="Gene3D" id="1.10.20.60">
    <property type="entry name" value="Glu-tRNAGln amidotransferase C subunit, N-terminal domain"/>
    <property type="match status" value="1"/>
</dbReference>
<dbReference type="HAMAP" id="MF_00122">
    <property type="entry name" value="GatC"/>
    <property type="match status" value="1"/>
</dbReference>
<dbReference type="InterPro" id="IPR036113">
    <property type="entry name" value="Asp/Glu-ADT_sf_sub_c"/>
</dbReference>
<dbReference type="InterPro" id="IPR003837">
    <property type="entry name" value="GatC"/>
</dbReference>
<dbReference type="NCBIfam" id="TIGR00135">
    <property type="entry name" value="gatC"/>
    <property type="match status" value="1"/>
</dbReference>
<dbReference type="PANTHER" id="PTHR15004">
    <property type="entry name" value="GLUTAMYL-TRNA(GLN) AMIDOTRANSFERASE SUBUNIT C, MITOCHONDRIAL"/>
    <property type="match status" value="1"/>
</dbReference>
<dbReference type="PANTHER" id="PTHR15004:SF0">
    <property type="entry name" value="GLUTAMYL-TRNA(GLN) AMIDOTRANSFERASE SUBUNIT C, MITOCHONDRIAL"/>
    <property type="match status" value="1"/>
</dbReference>
<dbReference type="Pfam" id="PF02686">
    <property type="entry name" value="GatC"/>
    <property type="match status" value="1"/>
</dbReference>
<dbReference type="SUPFAM" id="SSF141000">
    <property type="entry name" value="Glu-tRNAGln amidotransferase C subunit"/>
    <property type="match status" value="1"/>
</dbReference>
<proteinExistence type="inferred from homology"/>
<comment type="function">
    <text evidence="1">Allows the formation of correctly charged Asn-tRNA(Asn) or Gln-tRNA(Gln) through the transamidation of misacylated Asp-tRNA(Asn) or Glu-tRNA(Gln) in organisms which lack either or both of asparaginyl-tRNA or glutaminyl-tRNA synthetases. The reaction takes place in the presence of glutamine and ATP through an activated phospho-Asp-tRNA(Asn) or phospho-Glu-tRNA(Gln).</text>
</comment>
<comment type="catalytic activity">
    <reaction evidence="1">
        <text>L-glutamyl-tRNA(Gln) + L-glutamine + ATP + H2O = L-glutaminyl-tRNA(Gln) + L-glutamate + ADP + phosphate + H(+)</text>
        <dbReference type="Rhea" id="RHEA:17521"/>
        <dbReference type="Rhea" id="RHEA-COMP:9681"/>
        <dbReference type="Rhea" id="RHEA-COMP:9684"/>
        <dbReference type="ChEBI" id="CHEBI:15377"/>
        <dbReference type="ChEBI" id="CHEBI:15378"/>
        <dbReference type="ChEBI" id="CHEBI:29985"/>
        <dbReference type="ChEBI" id="CHEBI:30616"/>
        <dbReference type="ChEBI" id="CHEBI:43474"/>
        <dbReference type="ChEBI" id="CHEBI:58359"/>
        <dbReference type="ChEBI" id="CHEBI:78520"/>
        <dbReference type="ChEBI" id="CHEBI:78521"/>
        <dbReference type="ChEBI" id="CHEBI:456216"/>
    </reaction>
</comment>
<comment type="catalytic activity">
    <reaction evidence="1">
        <text>L-aspartyl-tRNA(Asn) + L-glutamine + ATP + H2O = L-asparaginyl-tRNA(Asn) + L-glutamate + ADP + phosphate + 2 H(+)</text>
        <dbReference type="Rhea" id="RHEA:14513"/>
        <dbReference type="Rhea" id="RHEA-COMP:9674"/>
        <dbReference type="Rhea" id="RHEA-COMP:9677"/>
        <dbReference type="ChEBI" id="CHEBI:15377"/>
        <dbReference type="ChEBI" id="CHEBI:15378"/>
        <dbReference type="ChEBI" id="CHEBI:29985"/>
        <dbReference type="ChEBI" id="CHEBI:30616"/>
        <dbReference type="ChEBI" id="CHEBI:43474"/>
        <dbReference type="ChEBI" id="CHEBI:58359"/>
        <dbReference type="ChEBI" id="CHEBI:78515"/>
        <dbReference type="ChEBI" id="CHEBI:78516"/>
        <dbReference type="ChEBI" id="CHEBI:456216"/>
    </reaction>
</comment>
<comment type="subunit">
    <text evidence="1">Heterotrimer of A, B and C subunits.</text>
</comment>
<comment type="similarity">
    <text evidence="1">Belongs to the GatC family.</text>
</comment>
<name>GATC_NITWN</name>
<sequence length="95" mass="10445">MSVDAATVRRIAHLARIAVDDAEVPHLQDELNAILAFVEQLQEVNVDGVEPMTSVTPMAMKMRTDVVNDGEIADRIVANAPVTHDHFFLVPKVVE</sequence>
<gene>
    <name evidence="1" type="primary">gatC</name>
    <name type="ordered locus">Nwi_2003</name>
</gene>
<reference key="1">
    <citation type="journal article" date="2006" name="Appl. Environ. Microbiol.">
        <title>Genome sequence of the chemolithoautotrophic nitrite-oxidizing bacterium Nitrobacter winogradskyi Nb-255.</title>
        <authorList>
            <person name="Starkenburg S.R."/>
            <person name="Chain P.S.G."/>
            <person name="Sayavedra-Soto L.A."/>
            <person name="Hauser L."/>
            <person name="Land M.L."/>
            <person name="Larimer F.W."/>
            <person name="Malfatti S.A."/>
            <person name="Klotz M.G."/>
            <person name="Bottomley P.J."/>
            <person name="Arp D.J."/>
            <person name="Hickey W.J."/>
        </authorList>
    </citation>
    <scope>NUCLEOTIDE SEQUENCE [LARGE SCALE GENOMIC DNA]</scope>
    <source>
        <strain>ATCC 25391 / DSM 10237 / CIP 104748 / NCIMB 11846 / Nb-255</strain>
    </source>
</reference>
<keyword id="KW-0067">ATP-binding</keyword>
<keyword id="KW-0436">Ligase</keyword>
<keyword id="KW-0547">Nucleotide-binding</keyword>
<keyword id="KW-0648">Protein biosynthesis</keyword>
<keyword id="KW-1185">Reference proteome</keyword>
<feature type="chain" id="PRO_1000016160" description="Aspartyl/glutamyl-tRNA(Asn/Gln) amidotransferase subunit C">
    <location>
        <begin position="1"/>
        <end position="95"/>
    </location>
</feature>
<protein>
    <recommendedName>
        <fullName evidence="1">Aspartyl/glutamyl-tRNA(Asn/Gln) amidotransferase subunit C</fullName>
        <shortName evidence="1">Asp/Glu-ADT subunit C</shortName>
        <ecNumber evidence="1">6.3.5.-</ecNumber>
    </recommendedName>
</protein>